<sequence>MVRTQTESSTPPGIPGGSRQGPAMDGTAAEPRPGAGSLQHAQPPPQPRKKRPEDFKFGKILGEGSFSTVVLARELATSREYAIKILEKRHIIKENKVPYVTRERDVMSRLDHPFFVKLYFTFQDDEKLYFGLSYAKNGELLKYIRKIGSFDETCTRFYTAEIVSALEYLHGKGIIHRDLKPENILLNEDMYIQITDFGTAKVLSPESKQARANSFVGTAQYVSPELLTEKSACKSSDLWALGCIIYQLVAGLPPFRAGNEYLIFQKIIKLEYDFPEKFFPKARDLVEKLLVLDATKRLGCEEMEGYGPLKAHPFFESVTWENLHQQTPPKLTAYLPAMSEDDEDCYGNVSWPGWRARQVALGPPCTGLHARAPDPRVICSRKGRVSVPLRQACWWL</sequence>
<keyword id="KW-0067">ATP-binding</keyword>
<keyword id="KW-0963">Cytoplasm</keyword>
<keyword id="KW-0418">Kinase</keyword>
<keyword id="KW-0472">Membrane</keyword>
<keyword id="KW-0547">Nucleotide-binding</keyword>
<keyword id="KW-0597">Phosphoprotein</keyword>
<keyword id="KW-1185">Reference proteome</keyword>
<keyword id="KW-0723">Serine/threonine-protein kinase</keyword>
<keyword id="KW-0808">Transferase</keyword>
<protein>
    <recommendedName>
        <fullName>Putative 3-phosphoinositide-dependent protein kinase 2</fullName>
        <ecNumber>2.7.11.1</ecNumber>
    </recommendedName>
    <alternativeName>
        <fullName evidence="7">3-phosphoinositide-dependent protein kinase 2 pseudogene</fullName>
    </alternativeName>
</protein>
<feature type="chain" id="PRO_0000341967" description="Putative 3-phosphoinositide-dependent protein kinase 2">
    <location>
        <begin position="1"/>
        <end position="396"/>
    </location>
</feature>
<feature type="domain" description="Protein kinase" evidence="3">
    <location>
        <begin position="55"/>
        <end position="315"/>
    </location>
</feature>
<feature type="region of interest" description="Disordered" evidence="5">
    <location>
        <begin position="1"/>
        <end position="53"/>
    </location>
</feature>
<feature type="region of interest" description="PIF-pocket" evidence="2">
    <location>
        <begin position="86"/>
        <end position="130"/>
    </location>
</feature>
<feature type="compositionally biased region" description="Polar residues" evidence="5">
    <location>
        <begin position="1"/>
        <end position="11"/>
    </location>
</feature>
<feature type="active site" description="Proton acceptor" evidence="3 4">
    <location>
        <position position="178"/>
    </location>
</feature>
<feature type="binding site" evidence="2">
    <location>
        <begin position="65"/>
        <end position="67"/>
    </location>
    <ligand>
        <name>ATP</name>
        <dbReference type="ChEBI" id="CHEBI:30616"/>
    </ligand>
</feature>
<feature type="binding site" evidence="2">
    <location>
        <position position="84"/>
    </location>
    <ligand>
        <name>ATP</name>
        <dbReference type="ChEBI" id="CHEBI:30616"/>
    </ligand>
</feature>
<feature type="binding site" evidence="2">
    <location>
        <begin position="133"/>
        <end position="135"/>
    </location>
    <ligand>
        <name>ATP</name>
        <dbReference type="ChEBI" id="CHEBI:30616"/>
    </ligand>
</feature>
<feature type="binding site" evidence="2">
    <location>
        <position position="139"/>
    </location>
    <ligand>
        <name>ATP</name>
        <dbReference type="ChEBI" id="CHEBI:30616"/>
    </ligand>
</feature>
<feature type="binding site" evidence="2">
    <location>
        <position position="182"/>
    </location>
    <ligand>
        <name>ATP</name>
        <dbReference type="ChEBI" id="CHEBI:30616"/>
    </ligand>
</feature>
<feature type="binding site" evidence="2">
    <location>
        <position position="196"/>
    </location>
    <ligand>
        <name>ATP</name>
        <dbReference type="ChEBI" id="CHEBI:30616"/>
    </ligand>
</feature>
<dbReference type="EC" id="2.7.11.1"/>
<dbReference type="EMBL" id="AJ785968">
    <property type="protein sequence ID" value="CAH05056.1"/>
    <property type="molecule type" value="mRNA"/>
</dbReference>
<dbReference type="SMR" id="Q6A1A2"/>
<dbReference type="FunCoup" id="Q6A1A2">
    <property type="interactions" value="731"/>
</dbReference>
<dbReference type="IntAct" id="Q6A1A2">
    <property type="interactions" value="1"/>
</dbReference>
<dbReference type="GlyCosmos" id="Q6A1A2">
    <property type="glycosylation" value="1 site, 1 glycan"/>
</dbReference>
<dbReference type="GlyGen" id="Q6A1A2">
    <property type="glycosylation" value="1 site, 1 O-linked glycan (1 site)"/>
</dbReference>
<dbReference type="iPTMnet" id="Q6A1A2"/>
<dbReference type="BioMuta" id="HGNC:49897"/>
<dbReference type="DMDM" id="74757401"/>
<dbReference type="jPOST" id="Q6A1A2"/>
<dbReference type="MassIVE" id="Q6A1A2"/>
<dbReference type="PeptideAtlas" id="Q6A1A2"/>
<dbReference type="Pumba" id="Q6A1A2"/>
<dbReference type="AGR" id="HGNC:49897"/>
<dbReference type="GeneCards" id="PDPK2P"/>
<dbReference type="HGNC" id="HGNC:49897">
    <property type="gene designation" value="PDPK2P"/>
</dbReference>
<dbReference type="neXtProt" id="NX_Q6A1A2"/>
<dbReference type="InParanoid" id="Q6A1A2"/>
<dbReference type="PAN-GO" id="Q6A1A2">
    <property type="GO annotations" value="3 GO annotations based on evolutionary models"/>
</dbReference>
<dbReference type="PhylomeDB" id="Q6A1A2"/>
<dbReference type="SignaLink" id="Q6A1A2"/>
<dbReference type="SIGNOR" id="Q6A1A2"/>
<dbReference type="ChiTaRS" id="PDPK2P">
    <property type="organism name" value="human"/>
</dbReference>
<dbReference type="Pharos" id="Q6A1A2">
    <property type="development level" value="Tdark"/>
</dbReference>
<dbReference type="PRO" id="PR:Q6A1A2"/>
<dbReference type="Proteomes" id="UP000005640">
    <property type="component" value="Unplaced"/>
</dbReference>
<dbReference type="RNAct" id="Q6A1A2">
    <property type="molecule type" value="protein"/>
</dbReference>
<dbReference type="GO" id="GO:0005737">
    <property type="term" value="C:cytoplasm"/>
    <property type="evidence" value="ECO:0007669"/>
    <property type="project" value="UniProtKB-SubCell"/>
</dbReference>
<dbReference type="GO" id="GO:0016020">
    <property type="term" value="C:membrane"/>
    <property type="evidence" value="ECO:0007669"/>
    <property type="project" value="UniProtKB-SubCell"/>
</dbReference>
<dbReference type="GO" id="GO:0005524">
    <property type="term" value="F:ATP binding"/>
    <property type="evidence" value="ECO:0007669"/>
    <property type="project" value="UniProtKB-KW"/>
</dbReference>
<dbReference type="GO" id="GO:0106310">
    <property type="term" value="F:protein serine kinase activity"/>
    <property type="evidence" value="ECO:0007669"/>
    <property type="project" value="RHEA"/>
</dbReference>
<dbReference type="GO" id="GO:0004674">
    <property type="term" value="F:protein serine/threonine kinase activity"/>
    <property type="evidence" value="ECO:0000318"/>
    <property type="project" value="GO_Central"/>
</dbReference>
<dbReference type="GO" id="GO:0035556">
    <property type="term" value="P:intracellular signal transduction"/>
    <property type="evidence" value="ECO:0000318"/>
    <property type="project" value="GO_Central"/>
</dbReference>
<dbReference type="CDD" id="cd05581">
    <property type="entry name" value="STKc_PDK1"/>
    <property type="match status" value="1"/>
</dbReference>
<dbReference type="FunFam" id="1.10.510.10:FF:000163">
    <property type="entry name" value="3-phosphoinositide-dependent protein kinase 1"/>
    <property type="match status" value="1"/>
</dbReference>
<dbReference type="FunFam" id="3.30.200.20:FF:000257">
    <property type="entry name" value="3-phosphoinositide-dependent protein kinase 1"/>
    <property type="match status" value="1"/>
</dbReference>
<dbReference type="Gene3D" id="3.30.200.20">
    <property type="entry name" value="Phosphorylase Kinase, domain 1"/>
    <property type="match status" value="1"/>
</dbReference>
<dbReference type="Gene3D" id="1.10.510.10">
    <property type="entry name" value="Transferase(Phosphotransferase) domain 1"/>
    <property type="match status" value="1"/>
</dbReference>
<dbReference type="InterPro" id="IPR011009">
    <property type="entry name" value="Kinase-like_dom_sf"/>
</dbReference>
<dbReference type="InterPro" id="IPR039046">
    <property type="entry name" value="PDPK1"/>
</dbReference>
<dbReference type="InterPro" id="IPR000719">
    <property type="entry name" value="Prot_kinase_dom"/>
</dbReference>
<dbReference type="InterPro" id="IPR017441">
    <property type="entry name" value="Protein_kinase_ATP_BS"/>
</dbReference>
<dbReference type="InterPro" id="IPR008271">
    <property type="entry name" value="Ser/Thr_kinase_AS"/>
</dbReference>
<dbReference type="InterPro" id="IPR050236">
    <property type="entry name" value="Ser_Thr_kinase_AGC"/>
</dbReference>
<dbReference type="PANTHER" id="PTHR24356:SF163">
    <property type="entry name" value="3-PHOSPHOINOSITIDE-DEPENDENT PROTEIN KINASE 1-RELATED"/>
    <property type="match status" value="1"/>
</dbReference>
<dbReference type="PANTHER" id="PTHR24356">
    <property type="entry name" value="SERINE/THREONINE-PROTEIN KINASE"/>
    <property type="match status" value="1"/>
</dbReference>
<dbReference type="Pfam" id="PF00069">
    <property type="entry name" value="Pkinase"/>
    <property type="match status" value="1"/>
</dbReference>
<dbReference type="SMART" id="SM00220">
    <property type="entry name" value="S_TKc"/>
    <property type="match status" value="1"/>
</dbReference>
<dbReference type="SUPFAM" id="SSF56112">
    <property type="entry name" value="Protein kinase-like (PK-like)"/>
    <property type="match status" value="1"/>
</dbReference>
<dbReference type="PROSITE" id="PS00107">
    <property type="entry name" value="PROTEIN_KINASE_ATP"/>
    <property type="match status" value="1"/>
</dbReference>
<dbReference type="PROSITE" id="PS50011">
    <property type="entry name" value="PROTEIN_KINASE_DOM"/>
    <property type="match status" value="1"/>
</dbReference>
<dbReference type="PROSITE" id="PS00108">
    <property type="entry name" value="PROTEIN_KINASE_ST"/>
    <property type="match status" value="1"/>
</dbReference>
<reference key="1">
    <citation type="submission" date="2004-07" db="EMBL/GenBank/DDBJ databases">
        <title>A novel member of human 3-phosphoinositide dependent protein kinase-1 family, PDPK2.</title>
        <authorList>
            <person name="Pingzhang W."/>
            <person name="Xin W."/>
            <person name="Tianjing C."/>
            <person name="Jun W."/>
            <person name="Ying L."/>
        </authorList>
    </citation>
    <scope>NUCLEOTIDE SEQUENCE [MRNA]</scope>
    <source>
        <tissue>Brain</tissue>
    </source>
</reference>
<name>PDPK2_HUMAN</name>
<organism>
    <name type="scientific">Homo sapiens</name>
    <name type="common">Human</name>
    <dbReference type="NCBI Taxonomy" id="9606"/>
    <lineage>
        <taxon>Eukaryota</taxon>
        <taxon>Metazoa</taxon>
        <taxon>Chordata</taxon>
        <taxon>Craniata</taxon>
        <taxon>Vertebrata</taxon>
        <taxon>Euteleostomi</taxon>
        <taxon>Mammalia</taxon>
        <taxon>Eutheria</taxon>
        <taxon>Euarchontoglires</taxon>
        <taxon>Primates</taxon>
        <taxon>Haplorrhini</taxon>
        <taxon>Catarrhini</taxon>
        <taxon>Hominidae</taxon>
        <taxon>Homo</taxon>
    </lineage>
</organism>
<accession>Q6A1A2</accession>
<evidence type="ECO:0000250" key="1"/>
<evidence type="ECO:0000250" key="2">
    <source>
        <dbReference type="UniProtKB" id="O15530"/>
    </source>
</evidence>
<evidence type="ECO:0000255" key="3">
    <source>
        <dbReference type="PROSITE-ProRule" id="PRU00159"/>
    </source>
</evidence>
<evidence type="ECO:0000255" key="4">
    <source>
        <dbReference type="PROSITE-ProRule" id="PRU10027"/>
    </source>
</evidence>
<evidence type="ECO:0000256" key="5">
    <source>
        <dbReference type="SAM" id="MobiDB-lite"/>
    </source>
</evidence>
<evidence type="ECO:0000303" key="6">
    <source ref="1"/>
</evidence>
<evidence type="ECO:0000305" key="7"/>
<evidence type="ECO:0000312" key="8">
    <source>
        <dbReference type="HGNC" id="HGNC:49897"/>
    </source>
</evidence>
<gene>
    <name evidence="8" type="primary">PDPK2P</name>
    <name evidence="6" type="synonym">PDPK2</name>
</gene>
<proteinExistence type="uncertain"/>
<comment type="function">
    <text evidence="1">Phosphorylates and activates not only PKB/AKT, but also PKA, PKC-zeta, RPS6KA1 and RPS6KB1. May play a general role in signaling processes and in development (By similarity).</text>
</comment>
<comment type="catalytic activity">
    <reaction>
        <text>L-seryl-[protein] + ATP = O-phospho-L-seryl-[protein] + ADP + H(+)</text>
        <dbReference type="Rhea" id="RHEA:17989"/>
        <dbReference type="Rhea" id="RHEA-COMP:9863"/>
        <dbReference type="Rhea" id="RHEA-COMP:11604"/>
        <dbReference type="ChEBI" id="CHEBI:15378"/>
        <dbReference type="ChEBI" id="CHEBI:29999"/>
        <dbReference type="ChEBI" id="CHEBI:30616"/>
        <dbReference type="ChEBI" id="CHEBI:83421"/>
        <dbReference type="ChEBI" id="CHEBI:456216"/>
        <dbReference type="EC" id="2.7.11.1"/>
    </reaction>
</comment>
<comment type="catalytic activity">
    <reaction>
        <text>L-threonyl-[protein] + ATP = O-phospho-L-threonyl-[protein] + ADP + H(+)</text>
        <dbReference type="Rhea" id="RHEA:46608"/>
        <dbReference type="Rhea" id="RHEA-COMP:11060"/>
        <dbReference type="Rhea" id="RHEA-COMP:11605"/>
        <dbReference type="ChEBI" id="CHEBI:15378"/>
        <dbReference type="ChEBI" id="CHEBI:30013"/>
        <dbReference type="ChEBI" id="CHEBI:30616"/>
        <dbReference type="ChEBI" id="CHEBI:61977"/>
        <dbReference type="ChEBI" id="CHEBI:456216"/>
        <dbReference type="EC" id="2.7.11.1"/>
    </reaction>
</comment>
<comment type="subcellular location">
    <subcellularLocation>
        <location evidence="1">Cytoplasm</location>
    </subcellularLocation>
    <subcellularLocation>
        <location evidence="1">Membrane</location>
        <topology evidence="1">Peripheral membrane protein</topology>
    </subcellularLocation>
</comment>
<comment type="domain">
    <text evidence="2">The PIF-pocket is a small lobe in the catalytic domain required by the enzyme for the binding to the hydrophobic motif of its substrates. It is an allosteric regulatory site that can accommodate small compounds acting as allosteric inhibitors.</text>
</comment>
<comment type="PTM">
    <text evidence="1">Phosphorylated on tyrosine and serine/threonine.</text>
</comment>
<comment type="similarity">
    <text evidence="7">Belongs to the protein kinase superfamily. AGC Ser/Thr protein kinase family. PDPK1 subfamily.</text>
</comment>
<comment type="caution">
    <text evidence="7">Could be the product of a pseudogene.</text>
</comment>